<proteinExistence type="inferred from homology"/>
<gene>
    <name evidence="1" type="primary">rpsH</name>
    <name evidence="1" type="synonym">rps8</name>
    <name type="ordered locus">Syncc9902_1968</name>
</gene>
<keyword id="KW-1185">Reference proteome</keyword>
<keyword id="KW-0687">Ribonucleoprotein</keyword>
<keyword id="KW-0689">Ribosomal protein</keyword>
<keyword id="KW-0694">RNA-binding</keyword>
<keyword id="KW-0699">rRNA-binding</keyword>
<organism>
    <name type="scientific">Synechococcus sp. (strain CC9902)</name>
    <dbReference type="NCBI Taxonomy" id="316279"/>
    <lineage>
        <taxon>Bacteria</taxon>
        <taxon>Bacillati</taxon>
        <taxon>Cyanobacteriota</taxon>
        <taxon>Cyanophyceae</taxon>
        <taxon>Synechococcales</taxon>
        <taxon>Synechococcaceae</taxon>
        <taxon>Synechococcus</taxon>
    </lineage>
</organism>
<protein>
    <recommendedName>
        <fullName evidence="1">Small ribosomal subunit protein uS8</fullName>
    </recommendedName>
    <alternativeName>
        <fullName evidence="3">30S ribosomal protein S8</fullName>
    </alternativeName>
</protein>
<name>RS8_SYNS9</name>
<dbReference type="EMBL" id="CP000097">
    <property type="protein sequence ID" value="ABB26926.1"/>
    <property type="molecule type" value="Genomic_DNA"/>
</dbReference>
<dbReference type="RefSeq" id="WP_011360722.1">
    <property type="nucleotide sequence ID" value="NC_007513.1"/>
</dbReference>
<dbReference type="SMR" id="Q3AW80"/>
<dbReference type="STRING" id="316279.Syncc9902_1968"/>
<dbReference type="KEGG" id="sye:Syncc9902_1968"/>
<dbReference type="eggNOG" id="COG0096">
    <property type="taxonomic scope" value="Bacteria"/>
</dbReference>
<dbReference type="HOGENOM" id="CLU_098428_0_2_3"/>
<dbReference type="OrthoDB" id="9802617at2"/>
<dbReference type="Proteomes" id="UP000002712">
    <property type="component" value="Chromosome"/>
</dbReference>
<dbReference type="GO" id="GO:1990904">
    <property type="term" value="C:ribonucleoprotein complex"/>
    <property type="evidence" value="ECO:0007669"/>
    <property type="project" value="UniProtKB-KW"/>
</dbReference>
<dbReference type="GO" id="GO:0005840">
    <property type="term" value="C:ribosome"/>
    <property type="evidence" value="ECO:0007669"/>
    <property type="project" value="UniProtKB-KW"/>
</dbReference>
<dbReference type="GO" id="GO:0019843">
    <property type="term" value="F:rRNA binding"/>
    <property type="evidence" value="ECO:0007669"/>
    <property type="project" value="UniProtKB-UniRule"/>
</dbReference>
<dbReference type="GO" id="GO:0003735">
    <property type="term" value="F:structural constituent of ribosome"/>
    <property type="evidence" value="ECO:0007669"/>
    <property type="project" value="InterPro"/>
</dbReference>
<dbReference type="GO" id="GO:0006412">
    <property type="term" value="P:translation"/>
    <property type="evidence" value="ECO:0007669"/>
    <property type="project" value="UniProtKB-UniRule"/>
</dbReference>
<dbReference type="FunFam" id="3.30.1370.30:FF:000002">
    <property type="entry name" value="30S ribosomal protein S8"/>
    <property type="match status" value="1"/>
</dbReference>
<dbReference type="FunFam" id="3.30.1490.10:FF:000001">
    <property type="entry name" value="30S ribosomal protein S8"/>
    <property type="match status" value="1"/>
</dbReference>
<dbReference type="Gene3D" id="3.30.1370.30">
    <property type="match status" value="1"/>
</dbReference>
<dbReference type="Gene3D" id="3.30.1490.10">
    <property type="match status" value="1"/>
</dbReference>
<dbReference type="HAMAP" id="MF_01302_B">
    <property type="entry name" value="Ribosomal_uS8_B"/>
    <property type="match status" value="1"/>
</dbReference>
<dbReference type="InterPro" id="IPR000630">
    <property type="entry name" value="Ribosomal_uS8"/>
</dbReference>
<dbReference type="InterPro" id="IPR047863">
    <property type="entry name" value="Ribosomal_uS8_CS"/>
</dbReference>
<dbReference type="InterPro" id="IPR035987">
    <property type="entry name" value="Ribosomal_uS8_sf"/>
</dbReference>
<dbReference type="NCBIfam" id="NF001109">
    <property type="entry name" value="PRK00136.1"/>
    <property type="match status" value="1"/>
</dbReference>
<dbReference type="PANTHER" id="PTHR11758">
    <property type="entry name" value="40S RIBOSOMAL PROTEIN S15A"/>
    <property type="match status" value="1"/>
</dbReference>
<dbReference type="Pfam" id="PF00410">
    <property type="entry name" value="Ribosomal_S8"/>
    <property type="match status" value="1"/>
</dbReference>
<dbReference type="SUPFAM" id="SSF56047">
    <property type="entry name" value="Ribosomal protein S8"/>
    <property type="match status" value="1"/>
</dbReference>
<dbReference type="PROSITE" id="PS00053">
    <property type="entry name" value="RIBOSOMAL_S8"/>
    <property type="match status" value="1"/>
</dbReference>
<feature type="chain" id="PRO_0000290950" description="Small ribosomal subunit protein uS8">
    <location>
        <begin position="1"/>
        <end position="133"/>
    </location>
</feature>
<feature type="region of interest" description="Disordered" evidence="2">
    <location>
        <begin position="1"/>
        <end position="30"/>
    </location>
</feature>
<feature type="compositionally biased region" description="Basic and acidic residues" evidence="2">
    <location>
        <begin position="16"/>
        <end position="25"/>
    </location>
</feature>
<reference key="1">
    <citation type="submission" date="2005-08" db="EMBL/GenBank/DDBJ databases">
        <title>Complete sequence of Synechococcus sp. CC9902.</title>
        <authorList>
            <person name="Copeland A."/>
            <person name="Lucas S."/>
            <person name="Lapidus A."/>
            <person name="Barry K."/>
            <person name="Detter J.C."/>
            <person name="Glavina T."/>
            <person name="Hammon N."/>
            <person name="Israni S."/>
            <person name="Pitluck S."/>
            <person name="Martinez M."/>
            <person name="Schmutz J."/>
            <person name="Larimer F."/>
            <person name="Land M."/>
            <person name="Kyrpides N."/>
            <person name="Ivanova N."/>
            <person name="Richardson P."/>
        </authorList>
    </citation>
    <scope>NUCLEOTIDE SEQUENCE [LARGE SCALE GENOMIC DNA]</scope>
    <source>
        <strain>CC9902</strain>
    </source>
</reference>
<comment type="function">
    <text evidence="1">One of the primary rRNA binding proteins, it binds directly to 16S rRNA central domain where it helps coordinate assembly of the platform of the 30S subunit.</text>
</comment>
<comment type="subunit">
    <text evidence="1">Part of the 30S ribosomal subunit. Contacts proteins S5 and S12.</text>
</comment>
<comment type="similarity">
    <text evidence="1">Belongs to the universal ribosomal protein uS8 family.</text>
</comment>
<evidence type="ECO:0000255" key="1">
    <source>
        <dbReference type="HAMAP-Rule" id="MF_01302"/>
    </source>
</evidence>
<evidence type="ECO:0000256" key="2">
    <source>
        <dbReference type="SAM" id="MobiDB-lite"/>
    </source>
</evidence>
<evidence type="ECO:0000305" key="3"/>
<sequence>MANHDPISDMLTRIRNASEKRHETTKVPASRMTRSIAKVLQQEGFISEINEEGEGFRAELVLSLKYSGKHRLPTIRSMQRVSKPGLRIYKNTRGLPKVLGGLGVAIISTSKGVMSDRDARREGVGGEVLCYVY</sequence>
<accession>Q3AW80</accession>